<feature type="signal peptide" evidence="1">
    <location>
        <begin position="1"/>
        <end position="21"/>
    </location>
</feature>
<feature type="chain" id="PRO_0000236834" description="Flagellar L-ring protein">
    <location>
        <begin position="22"/>
        <end position="232"/>
    </location>
</feature>
<feature type="lipid moiety-binding region" description="N-palmitoyl cysteine" evidence="1">
    <location>
        <position position="22"/>
    </location>
</feature>
<feature type="lipid moiety-binding region" description="S-diacylglycerol cysteine" evidence="1">
    <location>
        <position position="22"/>
    </location>
</feature>
<name>FLGH_SHIBS</name>
<gene>
    <name evidence="1" type="primary">flgH</name>
    <name type="ordered locus">SBO_1985</name>
</gene>
<evidence type="ECO:0000255" key="1">
    <source>
        <dbReference type="HAMAP-Rule" id="MF_00415"/>
    </source>
</evidence>
<reference key="1">
    <citation type="journal article" date="2005" name="Nucleic Acids Res.">
        <title>Genome dynamics and diversity of Shigella species, the etiologic agents of bacillary dysentery.</title>
        <authorList>
            <person name="Yang F."/>
            <person name="Yang J."/>
            <person name="Zhang X."/>
            <person name="Chen L."/>
            <person name="Jiang Y."/>
            <person name="Yan Y."/>
            <person name="Tang X."/>
            <person name="Wang J."/>
            <person name="Xiong Z."/>
            <person name="Dong J."/>
            <person name="Xue Y."/>
            <person name="Zhu Y."/>
            <person name="Xu X."/>
            <person name="Sun L."/>
            <person name="Chen S."/>
            <person name="Nie H."/>
            <person name="Peng J."/>
            <person name="Xu J."/>
            <person name="Wang Y."/>
            <person name="Yuan Z."/>
            <person name="Wen Y."/>
            <person name="Yao Z."/>
            <person name="Shen Y."/>
            <person name="Qiang B."/>
            <person name="Hou Y."/>
            <person name="Yu J."/>
            <person name="Jin Q."/>
        </authorList>
    </citation>
    <scope>NUCLEOTIDE SEQUENCE [LARGE SCALE GENOMIC DNA]</scope>
    <source>
        <strain>Sb227</strain>
    </source>
</reference>
<dbReference type="EMBL" id="CP000036">
    <property type="protein sequence ID" value="ABB66574.1"/>
    <property type="molecule type" value="Genomic_DNA"/>
</dbReference>
<dbReference type="RefSeq" id="WP_004984655.1">
    <property type="nucleotide sequence ID" value="NC_007613.1"/>
</dbReference>
<dbReference type="SMR" id="Q31ZD4"/>
<dbReference type="KEGG" id="sbo:SBO_1985"/>
<dbReference type="HOGENOM" id="CLU_069313_0_0_6"/>
<dbReference type="Proteomes" id="UP000007067">
    <property type="component" value="Chromosome"/>
</dbReference>
<dbReference type="GO" id="GO:0009427">
    <property type="term" value="C:bacterial-type flagellum basal body, distal rod, L ring"/>
    <property type="evidence" value="ECO:0007669"/>
    <property type="project" value="InterPro"/>
</dbReference>
<dbReference type="GO" id="GO:0009279">
    <property type="term" value="C:cell outer membrane"/>
    <property type="evidence" value="ECO:0007669"/>
    <property type="project" value="UniProtKB-SubCell"/>
</dbReference>
<dbReference type="GO" id="GO:0003774">
    <property type="term" value="F:cytoskeletal motor activity"/>
    <property type="evidence" value="ECO:0007669"/>
    <property type="project" value="InterPro"/>
</dbReference>
<dbReference type="GO" id="GO:0071973">
    <property type="term" value="P:bacterial-type flagellum-dependent cell motility"/>
    <property type="evidence" value="ECO:0007669"/>
    <property type="project" value="InterPro"/>
</dbReference>
<dbReference type="HAMAP" id="MF_00415">
    <property type="entry name" value="FlgH"/>
    <property type="match status" value="1"/>
</dbReference>
<dbReference type="InterPro" id="IPR000527">
    <property type="entry name" value="Flag_Lring"/>
</dbReference>
<dbReference type="PANTHER" id="PTHR34933">
    <property type="entry name" value="FLAGELLAR L-RING PROTEIN"/>
    <property type="match status" value="1"/>
</dbReference>
<dbReference type="PANTHER" id="PTHR34933:SF3">
    <property type="entry name" value="FLAGELLAR L-RING PROTEIN"/>
    <property type="match status" value="1"/>
</dbReference>
<dbReference type="Pfam" id="PF02107">
    <property type="entry name" value="FlgH"/>
    <property type="match status" value="1"/>
</dbReference>
<dbReference type="PRINTS" id="PR01008">
    <property type="entry name" value="FLGLRINGFLGH"/>
</dbReference>
<dbReference type="PROSITE" id="PS51257">
    <property type="entry name" value="PROKAR_LIPOPROTEIN"/>
    <property type="match status" value="1"/>
</dbReference>
<accession>Q31ZD4</accession>
<comment type="function">
    <text evidence="1">Assembles around the rod to form the L-ring and probably protects the motor/basal body from shearing forces during rotation.</text>
</comment>
<comment type="subunit">
    <text evidence="1">The basal body constitutes a major portion of the flagellar organelle and consists of four rings (L,P,S, and M) mounted on a central rod.</text>
</comment>
<comment type="subcellular location">
    <subcellularLocation>
        <location evidence="1">Cell outer membrane</location>
        <topology evidence="1">Lipid-anchor</topology>
    </subcellularLocation>
    <subcellularLocation>
        <location evidence="1">Bacterial flagellum basal body</location>
    </subcellularLocation>
</comment>
<comment type="similarity">
    <text evidence="1">Belongs to the FlgH family.</text>
</comment>
<organism>
    <name type="scientific">Shigella boydii serotype 4 (strain Sb227)</name>
    <dbReference type="NCBI Taxonomy" id="300268"/>
    <lineage>
        <taxon>Bacteria</taxon>
        <taxon>Pseudomonadati</taxon>
        <taxon>Pseudomonadota</taxon>
        <taxon>Gammaproteobacteria</taxon>
        <taxon>Enterobacterales</taxon>
        <taxon>Enterobacteriaceae</taxon>
        <taxon>Shigella</taxon>
    </lineage>
</organism>
<proteinExistence type="inferred from homology"/>
<keyword id="KW-0975">Bacterial flagellum</keyword>
<keyword id="KW-0998">Cell outer membrane</keyword>
<keyword id="KW-0449">Lipoprotein</keyword>
<keyword id="KW-0472">Membrane</keyword>
<keyword id="KW-0564">Palmitate</keyword>
<keyword id="KW-0732">Signal</keyword>
<protein>
    <recommendedName>
        <fullName evidence="1">Flagellar L-ring protein</fullName>
    </recommendedName>
    <alternativeName>
        <fullName evidence="1">Basal body L-ring protein</fullName>
    </alternativeName>
</protein>
<sequence>MQKNAAHTYAISSLLVLSLTGCAWIPSTPLVQGATSAQPVPGPTPVANGSIFQSAQPINYGYQPLFEDRRPRNIGDTLTIVLQENVSASKSSSANASRDGKTNFGFDTVPRYLQGLFGNARADVEASGGNTFNGKGGANASNTFSGTLTVTVDQVLVNGNLHVVGEKQIAINQGTEFIRFSGVVNPRTISGSNTVPSTQVVDARIEYVGNGYINEAQNMGWLQHFFLNLSPM</sequence>